<comment type="similarity">
    <text evidence="1">Belongs to the UPF0282 family.</text>
</comment>
<organism>
    <name type="scientific">Saccharolobus islandicus (strain M.16.27)</name>
    <name type="common">Sulfolobus islandicus</name>
    <dbReference type="NCBI Taxonomy" id="427318"/>
    <lineage>
        <taxon>Archaea</taxon>
        <taxon>Thermoproteota</taxon>
        <taxon>Thermoprotei</taxon>
        <taxon>Sulfolobales</taxon>
        <taxon>Sulfolobaceae</taxon>
        <taxon>Saccharolobus</taxon>
    </lineage>
</organism>
<accession>C3N0Q3</accession>
<proteinExistence type="inferred from homology"/>
<name>Y2198_SACI3</name>
<sequence>MKITPIAFESLGVRSQATLIETKDLRVLVDPAISLAPRRYNLPPHQREVDRLTELAKVLVDVAKDVDVIIVSHYHYDHHDPGYVIPTDIYKNKLVFIKDPQNMINNSQKYRRAPRFLRSIKDKPSKIEIADGKTFEVGHTTISFSPAVPHGADERLGYVIQVAISDKDSTVIFTSDIEGAPKDVHLKFTKEKMPKTIIIDGPLSYLLGRVLKEEELEKSIRNMEEIVKNGLETVIIDHHVLRDINYAEVLKPVYDIAKDLGVRVTTAAEYLNLEPLILEARRKELFKEDNRPARLPRGLANLLSAGEG</sequence>
<protein>
    <recommendedName>
        <fullName evidence="1">UPF0282 protein M1627_2198</fullName>
    </recommendedName>
</protein>
<reference key="1">
    <citation type="journal article" date="2009" name="Proc. Natl. Acad. Sci. U.S.A.">
        <title>Biogeography of the Sulfolobus islandicus pan-genome.</title>
        <authorList>
            <person name="Reno M.L."/>
            <person name="Held N.L."/>
            <person name="Fields C.J."/>
            <person name="Burke P.V."/>
            <person name="Whitaker R.J."/>
        </authorList>
    </citation>
    <scope>NUCLEOTIDE SEQUENCE [LARGE SCALE GENOMIC DNA]</scope>
    <source>
        <strain>M.16.27</strain>
    </source>
</reference>
<dbReference type="EMBL" id="CP001401">
    <property type="protein sequence ID" value="ACP56061.1"/>
    <property type="molecule type" value="Genomic_DNA"/>
</dbReference>
<dbReference type="RefSeq" id="WP_012712082.1">
    <property type="nucleotide sequence ID" value="NC_012632.1"/>
</dbReference>
<dbReference type="KEGG" id="sim:M1627_2198"/>
<dbReference type="HOGENOM" id="CLU_079268_0_0_2"/>
<dbReference type="Proteomes" id="UP000002307">
    <property type="component" value="Chromosome"/>
</dbReference>
<dbReference type="Gene3D" id="3.60.15.10">
    <property type="entry name" value="Ribonuclease Z/Hydroxyacylglutathione hydrolase-like"/>
    <property type="match status" value="1"/>
</dbReference>
<dbReference type="HAMAP" id="MF_01406">
    <property type="entry name" value="UPF0282"/>
    <property type="match status" value="1"/>
</dbReference>
<dbReference type="InterPro" id="IPR001279">
    <property type="entry name" value="Metallo-B-lactamas"/>
</dbReference>
<dbReference type="InterPro" id="IPR036866">
    <property type="entry name" value="RibonucZ/Hydroxyglut_hydro"/>
</dbReference>
<dbReference type="InterPro" id="IPR050114">
    <property type="entry name" value="UPF0173_UPF0282_UlaG_hydrolase"/>
</dbReference>
<dbReference type="InterPro" id="IPR014426">
    <property type="entry name" value="UPF0282_hydrls"/>
</dbReference>
<dbReference type="NCBIfam" id="NF003287">
    <property type="entry name" value="PRK04286.1-1"/>
    <property type="match status" value="1"/>
</dbReference>
<dbReference type="PANTHER" id="PTHR43546">
    <property type="entry name" value="UPF0173 METAL-DEPENDENT HYDROLASE MJ1163-RELATED"/>
    <property type="match status" value="1"/>
</dbReference>
<dbReference type="PANTHER" id="PTHR43546:SF4">
    <property type="entry name" value="UPF0282 PROTEIN MJ1629"/>
    <property type="match status" value="1"/>
</dbReference>
<dbReference type="Pfam" id="PF12706">
    <property type="entry name" value="Lactamase_B_2"/>
    <property type="match status" value="1"/>
</dbReference>
<dbReference type="PIRSF" id="PIRSF004944">
    <property type="entry name" value="UCP004944_hydrls"/>
    <property type="match status" value="1"/>
</dbReference>
<dbReference type="SUPFAM" id="SSF56281">
    <property type="entry name" value="Metallo-hydrolase/oxidoreductase"/>
    <property type="match status" value="1"/>
</dbReference>
<feature type="chain" id="PRO_1000215204" description="UPF0282 protein M1627_2198">
    <location>
        <begin position="1"/>
        <end position="308"/>
    </location>
</feature>
<evidence type="ECO:0000255" key="1">
    <source>
        <dbReference type="HAMAP-Rule" id="MF_01406"/>
    </source>
</evidence>
<gene>
    <name type="ordered locus">M1627_2198</name>
</gene>